<sequence length="312" mass="36435">MLSSLLITQFIYGTISTIIYSLTVVFLTKNWKHFDNYFLKLYICQFFFNMWMYWNFYITSRLPASTCKDCYLSGWFDSLSKDSGSMFPFKFFIFCQYHLGFMSYSNLFLTSINRFTLIFMPKRYFQIWHYGTYILIALIFITPILFTYPLLVHQAYLEYNPLSDTYVARTQADLPFLYSFILVWMVVTVLLSIIANIICWFKISKYSKAARQQSDYRLFLVSFVTFVINCGVFSIAMLNKISADIDPSKLLLSSRIAQLLSPFANDLLSLSTPYVLIIFSKRIRQSIKNLFIKGTVAPSSITPLQNIPASRI</sequence>
<evidence type="ECO:0000255" key="1"/>
<evidence type="ECO:0000305" key="2"/>
<proteinExistence type="inferred from homology"/>
<comment type="subcellular location">
    <subcellularLocation>
        <location evidence="2">Membrane</location>
        <topology evidence="2">Multi-pass membrane protein</topology>
    </subcellularLocation>
</comment>
<comment type="similarity">
    <text evidence="2">Belongs to the nematode receptor-like protein srg family.</text>
</comment>
<feature type="chain" id="PRO_0000104569" description="Serpentine receptor class gamma-31">
    <location>
        <begin position="1"/>
        <end position="312"/>
    </location>
</feature>
<feature type="transmembrane region" description="Helical" evidence="1">
    <location>
        <begin position="6"/>
        <end position="26"/>
    </location>
</feature>
<feature type="transmembrane region" description="Helical" evidence="1">
    <location>
        <begin position="38"/>
        <end position="58"/>
    </location>
</feature>
<feature type="transmembrane region" description="Helical" evidence="1">
    <location>
        <begin position="92"/>
        <end position="112"/>
    </location>
</feature>
<feature type="transmembrane region" description="Helical" evidence="1">
    <location>
        <begin position="132"/>
        <end position="152"/>
    </location>
</feature>
<feature type="transmembrane region" description="Helical" evidence="1">
    <location>
        <begin position="180"/>
        <end position="200"/>
    </location>
</feature>
<feature type="transmembrane region" description="Helical" evidence="1">
    <location>
        <begin position="218"/>
        <end position="238"/>
    </location>
</feature>
<feature type="transmembrane region" description="Helical" evidence="1">
    <location>
        <begin position="259"/>
        <end position="279"/>
    </location>
</feature>
<accession>O61892</accession>
<name>SRG31_CAEEL</name>
<protein>
    <recommendedName>
        <fullName>Serpentine receptor class gamma-31</fullName>
        <shortName>Protein srg-31</shortName>
    </recommendedName>
</protein>
<organism>
    <name type="scientific">Caenorhabditis elegans</name>
    <dbReference type="NCBI Taxonomy" id="6239"/>
    <lineage>
        <taxon>Eukaryota</taxon>
        <taxon>Metazoa</taxon>
        <taxon>Ecdysozoa</taxon>
        <taxon>Nematoda</taxon>
        <taxon>Chromadorea</taxon>
        <taxon>Rhabditida</taxon>
        <taxon>Rhabditina</taxon>
        <taxon>Rhabditomorpha</taxon>
        <taxon>Rhabditoidea</taxon>
        <taxon>Rhabditidae</taxon>
        <taxon>Peloderinae</taxon>
        <taxon>Caenorhabditis</taxon>
    </lineage>
</organism>
<gene>
    <name type="primary">srg-31</name>
    <name type="ORF">T07H8.5</name>
</gene>
<reference key="1">
    <citation type="journal article" date="1998" name="Science">
        <title>Genome sequence of the nematode C. elegans: a platform for investigating biology.</title>
        <authorList>
            <consortium name="The C. elegans sequencing consortium"/>
        </authorList>
    </citation>
    <scope>NUCLEOTIDE SEQUENCE [LARGE SCALE GENOMIC DNA]</scope>
    <source>
        <strain>Bristol N2</strain>
    </source>
</reference>
<dbReference type="EMBL" id="FO080767">
    <property type="protein sequence ID" value="CCD66560.1"/>
    <property type="molecule type" value="Genomic_DNA"/>
</dbReference>
<dbReference type="PIR" id="T33215">
    <property type="entry name" value="T33215"/>
</dbReference>
<dbReference type="RefSeq" id="NP_504758.1">
    <property type="nucleotide sequence ID" value="NM_072357.5"/>
</dbReference>
<dbReference type="SMR" id="O61892"/>
<dbReference type="FunCoup" id="O61892">
    <property type="interactions" value="7"/>
</dbReference>
<dbReference type="STRING" id="6239.T07H8.5.1"/>
<dbReference type="PaxDb" id="6239-T07H8.5"/>
<dbReference type="EnsemblMetazoa" id="T07H8.5.1">
    <property type="protein sequence ID" value="T07H8.5.1"/>
    <property type="gene ID" value="WBGene00005188"/>
</dbReference>
<dbReference type="GeneID" id="188260"/>
<dbReference type="KEGG" id="cel:CELE_T07H8.5"/>
<dbReference type="UCSC" id="T07H8.5">
    <property type="organism name" value="c. elegans"/>
</dbReference>
<dbReference type="AGR" id="WB:WBGene00005188"/>
<dbReference type="CTD" id="188260"/>
<dbReference type="WormBase" id="T07H8.5">
    <property type="protein sequence ID" value="CE18226"/>
    <property type="gene ID" value="WBGene00005188"/>
    <property type="gene designation" value="srg-31"/>
</dbReference>
<dbReference type="eggNOG" id="ENOG502TFH8">
    <property type="taxonomic scope" value="Eukaryota"/>
</dbReference>
<dbReference type="GeneTree" id="ENSGT00970000195860"/>
<dbReference type="HOGENOM" id="CLU_069704_1_1_1"/>
<dbReference type="InParanoid" id="O61892"/>
<dbReference type="OMA" id="FNMWMYW"/>
<dbReference type="OrthoDB" id="5805259at2759"/>
<dbReference type="PhylomeDB" id="O61892"/>
<dbReference type="PRO" id="PR:O61892"/>
<dbReference type="Proteomes" id="UP000001940">
    <property type="component" value="Chromosome V"/>
</dbReference>
<dbReference type="GO" id="GO:0016020">
    <property type="term" value="C:membrane"/>
    <property type="evidence" value="ECO:0007669"/>
    <property type="project" value="UniProtKB-SubCell"/>
</dbReference>
<dbReference type="GO" id="GO:0004888">
    <property type="term" value="F:transmembrane signaling receptor activity"/>
    <property type="evidence" value="ECO:0007669"/>
    <property type="project" value="InterPro"/>
</dbReference>
<dbReference type="GO" id="GO:0007606">
    <property type="term" value="P:sensory perception of chemical stimulus"/>
    <property type="evidence" value="ECO:0007669"/>
    <property type="project" value="InterPro"/>
</dbReference>
<dbReference type="CDD" id="cd00637">
    <property type="entry name" value="7tm_classA_rhodopsin-like"/>
    <property type="match status" value="1"/>
</dbReference>
<dbReference type="Gene3D" id="1.20.1070.10">
    <property type="entry name" value="Rhodopsin 7-helix transmembrane proteins"/>
    <property type="match status" value="1"/>
</dbReference>
<dbReference type="InterPro" id="IPR000609">
    <property type="entry name" value="7TM_GPCR_serpentine_rcpt_Srg"/>
</dbReference>
<dbReference type="PANTHER" id="PTHR31552">
    <property type="entry name" value="SERPENTINE RECEPTOR CLASS GAMMA"/>
    <property type="match status" value="1"/>
</dbReference>
<dbReference type="PANTHER" id="PTHR31552:SF26">
    <property type="entry name" value="SERPENTINE RECEPTOR CLASS GAMMA-31"/>
    <property type="match status" value="1"/>
</dbReference>
<dbReference type="Pfam" id="PF02118">
    <property type="entry name" value="Srg"/>
    <property type="match status" value="1"/>
</dbReference>
<dbReference type="SUPFAM" id="SSF81321">
    <property type="entry name" value="Family A G protein-coupled receptor-like"/>
    <property type="match status" value="1"/>
</dbReference>
<keyword id="KW-0472">Membrane</keyword>
<keyword id="KW-1185">Reference proteome</keyword>
<keyword id="KW-0812">Transmembrane</keyword>
<keyword id="KW-1133">Transmembrane helix</keyword>